<gene>
    <name evidence="1" type="primary">ycf3</name>
</gene>
<protein>
    <recommendedName>
        <fullName evidence="1">Photosystem I assembly protein Ycf3</fullName>
    </recommendedName>
</protein>
<sequence>MGVRNFIDRVFTVISDLILKLLPASKQEKQAFAYYKAGMAAQAEGDYAEALENYYESLYLDEDQYDRSYTLYNIGLIYAKNENYPRALEYYHQAVSLNSNLPQALNNIAAIYHRQGLLALEMASQDYDAEMEISEEYEYIELAKGLFDKAAEYWYQALKLAPDNYPRARNWLRITGRAKSLDSF</sequence>
<dbReference type="EMBL" id="EF067921">
    <property type="protein sequence ID" value="ABK20750.1"/>
    <property type="molecule type" value="Genomic_DNA"/>
</dbReference>
<dbReference type="RefSeq" id="YP_874527.1">
    <property type="nucleotide sequence ID" value="NC_008589.1"/>
</dbReference>
<dbReference type="SMR" id="A0T0R5"/>
<dbReference type="STRING" id="35128.A0T0R5"/>
<dbReference type="PaxDb" id="35128-Thapsdraft1435"/>
<dbReference type="GeneID" id="4524733"/>
<dbReference type="eggNOG" id="KOG1124">
    <property type="taxonomic scope" value="Eukaryota"/>
</dbReference>
<dbReference type="InParanoid" id="A0T0R5"/>
<dbReference type="OMA" id="VYYRDGM"/>
<dbReference type="GO" id="GO:0009535">
    <property type="term" value="C:chloroplast thylakoid membrane"/>
    <property type="evidence" value="ECO:0007669"/>
    <property type="project" value="UniProtKB-SubCell"/>
</dbReference>
<dbReference type="GO" id="GO:0015979">
    <property type="term" value="P:photosynthesis"/>
    <property type="evidence" value="ECO:0007669"/>
    <property type="project" value="UniProtKB-UniRule"/>
</dbReference>
<dbReference type="Gene3D" id="1.25.40.10">
    <property type="entry name" value="Tetratricopeptide repeat domain"/>
    <property type="match status" value="1"/>
</dbReference>
<dbReference type="HAMAP" id="MF_00439">
    <property type="entry name" value="Ycf3"/>
    <property type="match status" value="1"/>
</dbReference>
<dbReference type="InterPro" id="IPR022818">
    <property type="entry name" value="PSI_Ycf3_assembly"/>
</dbReference>
<dbReference type="InterPro" id="IPR011990">
    <property type="entry name" value="TPR-like_helical_dom_sf"/>
</dbReference>
<dbReference type="InterPro" id="IPR019734">
    <property type="entry name" value="TPR_rpt"/>
</dbReference>
<dbReference type="NCBIfam" id="NF002725">
    <property type="entry name" value="PRK02603.1"/>
    <property type="match status" value="1"/>
</dbReference>
<dbReference type="Pfam" id="PF00515">
    <property type="entry name" value="TPR_1"/>
    <property type="match status" value="1"/>
</dbReference>
<dbReference type="Pfam" id="PF13181">
    <property type="entry name" value="TPR_8"/>
    <property type="match status" value="1"/>
</dbReference>
<dbReference type="SMART" id="SM00028">
    <property type="entry name" value="TPR"/>
    <property type="match status" value="4"/>
</dbReference>
<dbReference type="SUPFAM" id="SSF48452">
    <property type="entry name" value="TPR-like"/>
    <property type="match status" value="1"/>
</dbReference>
<dbReference type="PROSITE" id="PS50005">
    <property type="entry name" value="TPR"/>
    <property type="match status" value="3"/>
</dbReference>
<dbReference type="PROSITE" id="PS50293">
    <property type="entry name" value="TPR_REGION"/>
    <property type="match status" value="2"/>
</dbReference>
<accession>A0T0R5</accession>
<keyword id="KW-0150">Chloroplast</keyword>
<keyword id="KW-0472">Membrane</keyword>
<keyword id="KW-0602">Photosynthesis</keyword>
<keyword id="KW-0934">Plastid</keyword>
<keyword id="KW-0677">Repeat</keyword>
<keyword id="KW-0793">Thylakoid</keyword>
<keyword id="KW-0802">TPR repeat</keyword>
<feature type="chain" id="PRO_0000325078" description="Photosystem I assembly protein Ycf3">
    <location>
        <begin position="1"/>
        <end position="184"/>
    </location>
</feature>
<feature type="repeat" description="TPR 1">
    <location>
        <begin position="31"/>
        <end position="64"/>
    </location>
</feature>
<feature type="repeat" description="TPR 2">
    <location>
        <begin position="68"/>
        <end position="101"/>
    </location>
</feature>
<feature type="repeat" description="TPR 3">
    <location>
        <begin position="131"/>
        <end position="164"/>
    </location>
</feature>
<reference key="1">
    <citation type="journal article" date="2007" name="Mol. Genet. Genomics">
        <title>Chloroplast genomes of the diatoms Phaeodactylum tricornutum and Thalassiosira pseudonana: comparison with other plastid genomes of the red lineage.</title>
        <authorList>
            <person name="Oudot-Le Secq M.-P."/>
            <person name="Grimwood J."/>
            <person name="Shapiro H."/>
            <person name="Armbrust E.V."/>
            <person name="Bowler C."/>
            <person name="Green B.R."/>
        </authorList>
    </citation>
    <scope>NUCLEOTIDE SEQUENCE [LARGE SCALE GENOMIC DNA]</scope>
    <source>
        <strain>CCMP1335 / NEPCC58 / CCAP 1085/12</strain>
    </source>
</reference>
<evidence type="ECO:0000255" key="1">
    <source>
        <dbReference type="HAMAP-Rule" id="MF_00439"/>
    </source>
</evidence>
<organism>
    <name type="scientific">Thalassiosira pseudonana</name>
    <name type="common">Marine diatom</name>
    <name type="synonym">Cyclotella nana</name>
    <dbReference type="NCBI Taxonomy" id="35128"/>
    <lineage>
        <taxon>Eukaryota</taxon>
        <taxon>Sar</taxon>
        <taxon>Stramenopiles</taxon>
        <taxon>Ochrophyta</taxon>
        <taxon>Bacillariophyta</taxon>
        <taxon>Coscinodiscophyceae</taxon>
        <taxon>Thalassiosirophycidae</taxon>
        <taxon>Thalassiosirales</taxon>
        <taxon>Thalassiosiraceae</taxon>
        <taxon>Thalassiosira</taxon>
    </lineage>
</organism>
<comment type="function">
    <text evidence="1">Essential for the assembly of the photosystem I (PSI) complex. May act as a chaperone-like factor to guide the assembly of the PSI subunits.</text>
</comment>
<comment type="subcellular location">
    <subcellularLocation>
        <location evidence="1">Plastid</location>
        <location evidence="1">Chloroplast thylakoid membrane</location>
        <topology evidence="1">Peripheral membrane protein</topology>
    </subcellularLocation>
</comment>
<comment type="similarity">
    <text evidence="1">Belongs to the Ycf3 family.</text>
</comment>
<proteinExistence type="inferred from homology"/>
<geneLocation type="chloroplast"/>
<name>YCF3_THAPS</name>